<feature type="chain" id="PRO_0000365244" description="DNA ligase">
    <location>
        <begin position="1"/>
        <end position="589"/>
    </location>
</feature>
<feature type="active site" description="N6-AMP-lysine intermediate" evidence="1">
    <location>
        <position position="252"/>
    </location>
</feature>
<feature type="binding site" evidence="1">
    <location>
        <position position="250"/>
    </location>
    <ligand>
        <name>ATP</name>
        <dbReference type="ChEBI" id="CHEBI:30616"/>
    </ligand>
</feature>
<feature type="binding site" evidence="1">
    <location>
        <position position="257"/>
    </location>
    <ligand>
        <name>ATP</name>
        <dbReference type="ChEBI" id="CHEBI:30616"/>
    </ligand>
</feature>
<feature type="binding site" evidence="1">
    <location>
        <position position="272"/>
    </location>
    <ligand>
        <name>ATP</name>
        <dbReference type="ChEBI" id="CHEBI:30616"/>
    </ligand>
</feature>
<feature type="binding site" evidence="1">
    <location>
        <position position="302"/>
    </location>
    <ligand>
        <name>ATP</name>
        <dbReference type="ChEBI" id="CHEBI:30616"/>
    </ligand>
</feature>
<feature type="binding site" evidence="1">
    <location>
        <position position="342"/>
    </location>
    <ligand>
        <name>ATP</name>
        <dbReference type="ChEBI" id="CHEBI:30616"/>
    </ligand>
</feature>
<feature type="binding site" evidence="1">
    <location>
        <position position="417"/>
    </location>
    <ligand>
        <name>ATP</name>
        <dbReference type="ChEBI" id="CHEBI:30616"/>
    </ligand>
</feature>
<feature type="binding site" evidence="1">
    <location>
        <position position="423"/>
    </location>
    <ligand>
        <name>ATP</name>
        <dbReference type="ChEBI" id="CHEBI:30616"/>
    </ligand>
</feature>
<evidence type="ECO:0000255" key="1">
    <source>
        <dbReference type="HAMAP-Rule" id="MF_00407"/>
    </source>
</evidence>
<evidence type="ECO:0000305" key="2"/>
<reference key="1">
    <citation type="journal article" date="2006" name="Proc. Natl. Acad. Sci. U.S.A.">
        <title>Genomic analysis of the uncultivated marine crenarchaeote Cenarchaeum symbiosum.</title>
        <authorList>
            <person name="Hallam S.J."/>
            <person name="Konstantinidis K.T."/>
            <person name="Putnam N."/>
            <person name="Schleper C."/>
            <person name="Watanabe Y."/>
            <person name="Sugahara J."/>
            <person name="Preston C."/>
            <person name="de la Torre J."/>
            <person name="Richardson P.M."/>
            <person name="DeLong E.F."/>
        </authorList>
    </citation>
    <scope>NUCLEOTIDE SEQUENCE [LARGE SCALE GENOMIC DNA]</scope>
    <source>
        <strain>A</strain>
    </source>
</reference>
<organism>
    <name type="scientific">Cenarchaeum symbiosum (strain A)</name>
    <dbReference type="NCBI Taxonomy" id="414004"/>
    <lineage>
        <taxon>Archaea</taxon>
        <taxon>Nitrososphaerota</taxon>
        <taxon>Candidatus Cenarchaeales</taxon>
        <taxon>Candidatus Cenarchaeaceae</taxon>
        <taxon>Candidatus Cenarchaeum</taxon>
    </lineage>
</organism>
<proteinExistence type="inferred from homology"/>
<comment type="function">
    <text evidence="1">DNA ligase that seals nicks in double-stranded DNA during DNA replication, DNA recombination and DNA repair.</text>
</comment>
<comment type="catalytic activity">
    <reaction evidence="1">
        <text>ATP + (deoxyribonucleotide)n-3'-hydroxyl + 5'-phospho-(deoxyribonucleotide)m = (deoxyribonucleotide)n+m + AMP + diphosphate.</text>
        <dbReference type="EC" id="6.5.1.1"/>
    </reaction>
</comment>
<comment type="cofactor">
    <cofactor evidence="1">
        <name>Mg(2+)</name>
        <dbReference type="ChEBI" id="CHEBI:18420"/>
    </cofactor>
</comment>
<comment type="similarity">
    <text evidence="1">Belongs to the ATP-dependent DNA ligase family.</text>
</comment>
<comment type="sequence caution" evidence="2">
    <conflict type="erroneous initiation">
        <sequence resource="EMBL-CDS" id="ABK77653"/>
    </conflict>
</comment>
<protein>
    <recommendedName>
        <fullName evidence="1">DNA ligase</fullName>
        <ecNumber evidence="1">6.5.1.1</ecNumber>
    </recommendedName>
    <alternativeName>
        <fullName evidence="1">Polydeoxyribonucleotide synthase [ATP]</fullName>
    </alternativeName>
</protein>
<sequence>MQFSVLAGSLEKMESTAKRLELTGILEELLRETPHEVIAQIVYLIQGKLRPEFEGIELGVAEKLAVRAVSKSSGMPAARIEAAYRRDGDLGRAASSILEQKTQTTFLAEEITVERVYDTLMRIARLEGARSQDMKMRHISSLLNDASPRDACYILKLILGTLRLGIAENTVMDALAAAFTGSKSNRPELERAYNVSSDLGRVAEAVSSGGLEAVRGFAVAVFSPIRPMLADRVRSESEALEKMGAGLAAEYKLDGERVQVHLSGGRVELFSRSLENITAYYPDIVERIPGRLRAREAVLEAEAVAVNEETGEFLPFQELMHRRRKYDIDKAVMRYPITVNFFDILYLDGRDCLGISYSERRALLEGVVDEDSFARCVPVSTIPDESALEDSLENSINAGCEGLMLKLPDAPYRAGSRGGYWLKLKREYRNELGDSLDLVIIGAFFGKGRRTGRYGTLLLATYDDSRDTFPSICKVGTGFTDEDLDQLYQLLSPRVTLKRNPRIDSGMEADVWFDPEVVMEVVASEITLSPVHKTALDSVRKGAGLALRFPKFTGKLRTEKTAEDASTDQEVIALYKSQKKVVPDGQPGV</sequence>
<name>DNLI_CENSY</name>
<accession>A0RWD6</accession>
<dbReference type="EC" id="6.5.1.1" evidence="1"/>
<dbReference type="EMBL" id="DP000238">
    <property type="protein sequence ID" value="ABK77653.1"/>
    <property type="status" value="ALT_INIT"/>
    <property type="molecule type" value="Genomic_DNA"/>
</dbReference>
<dbReference type="SMR" id="A0RWD6"/>
<dbReference type="STRING" id="414004.CENSYa_1021"/>
<dbReference type="EnsemblBacteria" id="ABK77653">
    <property type="protein sequence ID" value="ABK77653"/>
    <property type="gene ID" value="CENSYa_1021"/>
</dbReference>
<dbReference type="KEGG" id="csy:CENSYa_1021"/>
<dbReference type="PATRIC" id="fig|414004.10.peg.943"/>
<dbReference type="HOGENOM" id="CLU_005138_6_0_2"/>
<dbReference type="Proteomes" id="UP000000758">
    <property type="component" value="Chromosome"/>
</dbReference>
<dbReference type="GO" id="GO:0005524">
    <property type="term" value="F:ATP binding"/>
    <property type="evidence" value="ECO:0007669"/>
    <property type="project" value="UniProtKB-UniRule"/>
</dbReference>
<dbReference type="GO" id="GO:0003677">
    <property type="term" value="F:DNA binding"/>
    <property type="evidence" value="ECO:0007669"/>
    <property type="project" value="InterPro"/>
</dbReference>
<dbReference type="GO" id="GO:0003910">
    <property type="term" value="F:DNA ligase (ATP) activity"/>
    <property type="evidence" value="ECO:0007669"/>
    <property type="project" value="UniProtKB-UniRule"/>
</dbReference>
<dbReference type="GO" id="GO:0046872">
    <property type="term" value="F:metal ion binding"/>
    <property type="evidence" value="ECO:0007669"/>
    <property type="project" value="UniProtKB-KW"/>
</dbReference>
<dbReference type="GO" id="GO:0051301">
    <property type="term" value="P:cell division"/>
    <property type="evidence" value="ECO:0007669"/>
    <property type="project" value="UniProtKB-KW"/>
</dbReference>
<dbReference type="GO" id="GO:0071897">
    <property type="term" value="P:DNA biosynthetic process"/>
    <property type="evidence" value="ECO:0007669"/>
    <property type="project" value="InterPro"/>
</dbReference>
<dbReference type="GO" id="GO:0006310">
    <property type="term" value="P:DNA recombination"/>
    <property type="evidence" value="ECO:0007669"/>
    <property type="project" value="UniProtKB-UniRule"/>
</dbReference>
<dbReference type="GO" id="GO:0006281">
    <property type="term" value="P:DNA repair"/>
    <property type="evidence" value="ECO:0007669"/>
    <property type="project" value="UniProtKB-UniRule"/>
</dbReference>
<dbReference type="GO" id="GO:0006273">
    <property type="term" value="P:lagging strand elongation"/>
    <property type="evidence" value="ECO:0007669"/>
    <property type="project" value="TreeGrafter"/>
</dbReference>
<dbReference type="CDD" id="cd07901">
    <property type="entry name" value="Adenylation_DNA_ligase_Arch_LigB"/>
    <property type="match status" value="1"/>
</dbReference>
<dbReference type="CDD" id="cd07969">
    <property type="entry name" value="OBF_DNA_ligase_I"/>
    <property type="match status" value="1"/>
</dbReference>
<dbReference type="FunFam" id="1.10.3260.10:FF:000007">
    <property type="entry name" value="DNA ligase"/>
    <property type="match status" value="1"/>
</dbReference>
<dbReference type="FunFam" id="2.40.50.140:FF:000062">
    <property type="entry name" value="DNA ligase"/>
    <property type="match status" value="1"/>
</dbReference>
<dbReference type="FunFam" id="3.30.470.30:FF:000012">
    <property type="entry name" value="Probable DNA ligase"/>
    <property type="match status" value="1"/>
</dbReference>
<dbReference type="Gene3D" id="1.10.3260.10">
    <property type="entry name" value="DNA ligase, ATP-dependent, N-terminal domain"/>
    <property type="match status" value="1"/>
</dbReference>
<dbReference type="Gene3D" id="3.30.470.30">
    <property type="entry name" value="DNA ligase/mRNA capping enzyme"/>
    <property type="match status" value="1"/>
</dbReference>
<dbReference type="Gene3D" id="2.40.50.140">
    <property type="entry name" value="Nucleic acid-binding proteins"/>
    <property type="match status" value="1"/>
</dbReference>
<dbReference type="HAMAP" id="MF_00407">
    <property type="entry name" value="DNA_ligase"/>
    <property type="match status" value="1"/>
</dbReference>
<dbReference type="InterPro" id="IPR050191">
    <property type="entry name" value="ATP-dep_DNA_ligase"/>
</dbReference>
<dbReference type="InterPro" id="IPR022865">
    <property type="entry name" value="DNA_ligae_ATP-dep_bac/arc"/>
</dbReference>
<dbReference type="InterPro" id="IPR000977">
    <property type="entry name" value="DNA_ligase_ATP-dep"/>
</dbReference>
<dbReference type="InterPro" id="IPR012309">
    <property type="entry name" value="DNA_ligase_ATP-dep_C"/>
</dbReference>
<dbReference type="InterPro" id="IPR012310">
    <property type="entry name" value="DNA_ligase_ATP-dep_cent"/>
</dbReference>
<dbReference type="InterPro" id="IPR016059">
    <property type="entry name" value="DNA_ligase_ATP-dep_CS"/>
</dbReference>
<dbReference type="InterPro" id="IPR012308">
    <property type="entry name" value="DNA_ligase_ATP-dep_N"/>
</dbReference>
<dbReference type="InterPro" id="IPR036599">
    <property type="entry name" value="DNA_ligase_N_sf"/>
</dbReference>
<dbReference type="InterPro" id="IPR012340">
    <property type="entry name" value="NA-bd_OB-fold"/>
</dbReference>
<dbReference type="NCBIfam" id="TIGR00574">
    <property type="entry name" value="dnl1"/>
    <property type="match status" value="1"/>
</dbReference>
<dbReference type="PANTHER" id="PTHR45674:SF4">
    <property type="entry name" value="DNA LIGASE 1"/>
    <property type="match status" value="1"/>
</dbReference>
<dbReference type="PANTHER" id="PTHR45674">
    <property type="entry name" value="DNA LIGASE 1/3 FAMILY MEMBER"/>
    <property type="match status" value="1"/>
</dbReference>
<dbReference type="Pfam" id="PF04679">
    <property type="entry name" value="DNA_ligase_A_C"/>
    <property type="match status" value="1"/>
</dbReference>
<dbReference type="Pfam" id="PF01068">
    <property type="entry name" value="DNA_ligase_A_M"/>
    <property type="match status" value="1"/>
</dbReference>
<dbReference type="Pfam" id="PF04675">
    <property type="entry name" value="DNA_ligase_A_N"/>
    <property type="match status" value="1"/>
</dbReference>
<dbReference type="SUPFAM" id="SSF117018">
    <property type="entry name" value="ATP-dependent DNA ligase DNA-binding domain"/>
    <property type="match status" value="1"/>
</dbReference>
<dbReference type="SUPFAM" id="SSF56091">
    <property type="entry name" value="DNA ligase/mRNA capping enzyme, catalytic domain"/>
    <property type="match status" value="1"/>
</dbReference>
<dbReference type="SUPFAM" id="SSF50249">
    <property type="entry name" value="Nucleic acid-binding proteins"/>
    <property type="match status" value="1"/>
</dbReference>
<dbReference type="PROSITE" id="PS00697">
    <property type="entry name" value="DNA_LIGASE_A1"/>
    <property type="match status" value="1"/>
</dbReference>
<dbReference type="PROSITE" id="PS50160">
    <property type="entry name" value="DNA_LIGASE_A3"/>
    <property type="match status" value="1"/>
</dbReference>
<keyword id="KW-0067">ATP-binding</keyword>
<keyword id="KW-0131">Cell cycle</keyword>
<keyword id="KW-0132">Cell division</keyword>
<keyword id="KW-0227">DNA damage</keyword>
<keyword id="KW-0233">DNA recombination</keyword>
<keyword id="KW-0234">DNA repair</keyword>
<keyword id="KW-0235">DNA replication</keyword>
<keyword id="KW-0436">Ligase</keyword>
<keyword id="KW-0460">Magnesium</keyword>
<keyword id="KW-0479">Metal-binding</keyword>
<keyword id="KW-0547">Nucleotide-binding</keyword>
<keyword id="KW-1185">Reference proteome</keyword>
<gene>
    <name evidence="1" type="primary">lig</name>
    <name type="ordered locus">CENSYa_1021</name>
</gene>